<organism>
    <name type="scientific">Paraburkholderia xenovorans (strain LB400)</name>
    <dbReference type="NCBI Taxonomy" id="266265"/>
    <lineage>
        <taxon>Bacteria</taxon>
        <taxon>Pseudomonadati</taxon>
        <taxon>Pseudomonadota</taxon>
        <taxon>Betaproteobacteria</taxon>
        <taxon>Burkholderiales</taxon>
        <taxon>Burkholderiaceae</taxon>
        <taxon>Paraburkholderia</taxon>
    </lineage>
</organism>
<accession>Q13WM0</accession>
<keyword id="KW-0028">Amino-acid biosynthesis</keyword>
<keyword id="KW-0100">Branched-chain amino acid biosynthesis</keyword>
<keyword id="KW-0963">Cytoplasm</keyword>
<keyword id="KW-0432">Leucine biosynthesis</keyword>
<keyword id="KW-0460">Magnesium</keyword>
<keyword id="KW-0479">Metal-binding</keyword>
<keyword id="KW-1185">Reference proteome</keyword>
<keyword id="KW-0808">Transferase</keyword>
<comment type="function">
    <text evidence="1">Catalyzes the condensation of the acetyl group of acetyl-CoA with 3-methyl-2-oxobutanoate (2-ketoisovalerate) to form 3-carboxy-3-hydroxy-4-methylpentanoate (2-isopropylmalate).</text>
</comment>
<comment type="catalytic activity">
    <reaction evidence="1">
        <text>3-methyl-2-oxobutanoate + acetyl-CoA + H2O = (2S)-2-isopropylmalate + CoA + H(+)</text>
        <dbReference type="Rhea" id="RHEA:21524"/>
        <dbReference type="ChEBI" id="CHEBI:1178"/>
        <dbReference type="ChEBI" id="CHEBI:11851"/>
        <dbReference type="ChEBI" id="CHEBI:15377"/>
        <dbReference type="ChEBI" id="CHEBI:15378"/>
        <dbReference type="ChEBI" id="CHEBI:57287"/>
        <dbReference type="ChEBI" id="CHEBI:57288"/>
        <dbReference type="EC" id="2.3.3.13"/>
    </reaction>
</comment>
<comment type="cofactor">
    <cofactor evidence="1">
        <name>Mg(2+)</name>
        <dbReference type="ChEBI" id="CHEBI:18420"/>
    </cofactor>
</comment>
<comment type="pathway">
    <text evidence="1">Amino-acid biosynthesis; L-leucine biosynthesis; L-leucine from 3-methyl-2-oxobutanoate: step 1/4.</text>
</comment>
<comment type="subunit">
    <text evidence="1">Homodimer.</text>
</comment>
<comment type="subcellular location">
    <subcellularLocation>
        <location evidence="1">Cytoplasm</location>
    </subcellularLocation>
</comment>
<comment type="similarity">
    <text evidence="1">Belongs to the alpha-IPM synthase/homocitrate synthase family. LeuA type 2 subfamily.</text>
</comment>
<reference key="1">
    <citation type="journal article" date="2006" name="Proc. Natl. Acad. Sci. U.S.A.">
        <title>Burkholderia xenovorans LB400 harbors a multi-replicon, 9.73-Mbp genome shaped for versatility.</title>
        <authorList>
            <person name="Chain P.S.G."/>
            <person name="Denef V.J."/>
            <person name="Konstantinidis K.T."/>
            <person name="Vergez L.M."/>
            <person name="Agullo L."/>
            <person name="Reyes V.L."/>
            <person name="Hauser L."/>
            <person name="Cordova M."/>
            <person name="Gomez L."/>
            <person name="Gonzalez M."/>
            <person name="Land M."/>
            <person name="Lao V."/>
            <person name="Larimer F."/>
            <person name="LiPuma J.J."/>
            <person name="Mahenthiralingam E."/>
            <person name="Malfatti S.A."/>
            <person name="Marx C.J."/>
            <person name="Parnell J.J."/>
            <person name="Ramette A."/>
            <person name="Richardson P."/>
            <person name="Seeger M."/>
            <person name="Smith D."/>
            <person name="Spilker T."/>
            <person name="Sul W.J."/>
            <person name="Tsoi T.V."/>
            <person name="Ulrich L.E."/>
            <person name="Zhulin I.B."/>
            <person name="Tiedje J.M."/>
        </authorList>
    </citation>
    <scope>NUCLEOTIDE SEQUENCE [LARGE SCALE GENOMIC DNA]</scope>
    <source>
        <strain>LB400</strain>
    </source>
</reference>
<protein>
    <recommendedName>
        <fullName evidence="1">2-isopropylmalate synthase</fullName>
        <ecNumber evidence="1">2.3.3.13</ecNumber>
    </recommendedName>
    <alternativeName>
        <fullName evidence="1">Alpha-IPM synthase</fullName>
    </alternativeName>
    <alternativeName>
        <fullName evidence="1">Alpha-isopropylmalate synthase</fullName>
    </alternativeName>
</protein>
<proteinExistence type="inferred from homology"/>
<evidence type="ECO:0000255" key="1">
    <source>
        <dbReference type="HAMAP-Rule" id="MF_00572"/>
    </source>
</evidence>
<dbReference type="EC" id="2.3.3.13" evidence="1"/>
<dbReference type="EMBL" id="CP000270">
    <property type="protein sequence ID" value="ABE31519.1"/>
    <property type="molecule type" value="Genomic_DNA"/>
</dbReference>
<dbReference type="RefSeq" id="WP_011489091.1">
    <property type="nucleotide sequence ID" value="NC_007951.1"/>
</dbReference>
<dbReference type="SMR" id="Q13WM0"/>
<dbReference type="STRING" id="266265.Bxe_A1435"/>
<dbReference type="KEGG" id="bxb:DR64_3600"/>
<dbReference type="KEGG" id="bxe:Bxe_A1435"/>
<dbReference type="PATRIC" id="fig|266265.5.peg.3134"/>
<dbReference type="eggNOG" id="COG0119">
    <property type="taxonomic scope" value="Bacteria"/>
</dbReference>
<dbReference type="OrthoDB" id="9803573at2"/>
<dbReference type="UniPathway" id="UPA00048">
    <property type="reaction ID" value="UER00070"/>
</dbReference>
<dbReference type="Proteomes" id="UP000001817">
    <property type="component" value="Chromosome 1"/>
</dbReference>
<dbReference type="GO" id="GO:0005737">
    <property type="term" value="C:cytoplasm"/>
    <property type="evidence" value="ECO:0007669"/>
    <property type="project" value="UniProtKB-SubCell"/>
</dbReference>
<dbReference type="GO" id="GO:0003852">
    <property type="term" value="F:2-isopropylmalate synthase activity"/>
    <property type="evidence" value="ECO:0007669"/>
    <property type="project" value="UniProtKB-UniRule"/>
</dbReference>
<dbReference type="GO" id="GO:0003985">
    <property type="term" value="F:acetyl-CoA C-acetyltransferase activity"/>
    <property type="evidence" value="ECO:0007669"/>
    <property type="project" value="UniProtKB-UniRule"/>
</dbReference>
<dbReference type="GO" id="GO:0000287">
    <property type="term" value="F:magnesium ion binding"/>
    <property type="evidence" value="ECO:0007669"/>
    <property type="project" value="UniProtKB-UniRule"/>
</dbReference>
<dbReference type="GO" id="GO:0009098">
    <property type="term" value="P:L-leucine biosynthetic process"/>
    <property type="evidence" value="ECO:0007669"/>
    <property type="project" value="UniProtKB-UniRule"/>
</dbReference>
<dbReference type="CDD" id="cd07942">
    <property type="entry name" value="DRE_TIM_LeuA"/>
    <property type="match status" value="1"/>
</dbReference>
<dbReference type="FunFam" id="3.20.20.70:FF:000045">
    <property type="entry name" value="2-isopropylmalate synthase"/>
    <property type="match status" value="1"/>
</dbReference>
<dbReference type="Gene3D" id="3.30.160.270">
    <property type="match status" value="1"/>
</dbReference>
<dbReference type="Gene3D" id="3.20.20.70">
    <property type="entry name" value="Aldolase class I"/>
    <property type="match status" value="1"/>
</dbReference>
<dbReference type="HAMAP" id="MF_00572">
    <property type="entry name" value="LeuA_type2"/>
    <property type="match status" value="1"/>
</dbReference>
<dbReference type="InterPro" id="IPR013709">
    <property type="entry name" value="2-isopropylmalate_synth_dimer"/>
</dbReference>
<dbReference type="InterPro" id="IPR002034">
    <property type="entry name" value="AIPM/Hcit_synth_CS"/>
</dbReference>
<dbReference type="InterPro" id="IPR013785">
    <property type="entry name" value="Aldolase_TIM"/>
</dbReference>
<dbReference type="InterPro" id="IPR005668">
    <property type="entry name" value="IPM_Synthase"/>
</dbReference>
<dbReference type="InterPro" id="IPR054692">
    <property type="entry name" value="LeuA-like_post-cat"/>
</dbReference>
<dbReference type="InterPro" id="IPR036230">
    <property type="entry name" value="LeuA_allosteric_dom_sf"/>
</dbReference>
<dbReference type="InterPro" id="IPR039371">
    <property type="entry name" value="LeuA_N_DRE-TIM"/>
</dbReference>
<dbReference type="InterPro" id="IPR000891">
    <property type="entry name" value="PYR_CT"/>
</dbReference>
<dbReference type="NCBIfam" id="TIGR00970">
    <property type="entry name" value="leuA_yeast"/>
    <property type="match status" value="1"/>
</dbReference>
<dbReference type="NCBIfam" id="NF002991">
    <property type="entry name" value="PRK03739.1"/>
    <property type="match status" value="1"/>
</dbReference>
<dbReference type="PANTHER" id="PTHR46911">
    <property type="match status" value="1"/>
</dbReference>
<dbReference type="PANTHER" id="PTHR46911:SF1">
    <property type="entry name" value="2-ISOPROPYLMALATE SYNTHASE"/>
    <property type="match status" value="1"/>
</dbReference>
<dbReference type="Pfam" id="PF00682">
    <property type="entry name" value="HMGL-like"/>
    <property type="match status" value="1"/>
</dbReference>
<dbReference type="Pfam" id="PF22615">
    <property type="entry name" value="IPMS_D2"/>
    <property type="match status" value="1"/>
</dbReference>
<dbReference type="Pfam" id="PF08502">
    <property type="entry name" value="LeuA_dimer"/>
    <property type="match status" value="1"/>
</dbReference>
<dbReference type="SMART" id="SM00917">
    <property type="entry name" value="LeuA_dimer"/>
    <property type="match status" value="1"/>
</dbReference>
<dbReference type="SUPFAM" id="SSF110921">
    <property type="entry name" value="2-isopropylmalate synthase LeuA, allosteric (dimerisation) domain"/>
    <property type="match status" value="1"/>
</dbReference>
<dbReference type="SUPFAM" id="SSF51569">
    <property type="entry name" value="Aldolase"/>
    <property type="match status" value="1"/>
</dbReference>
<dbReference type="SUPFAM" id="SSF89000">
    <property type="entry name" value="post-HMGL domain-like"/>
    <property type="match status" value="1"/>
</dbReference>
<dbReference type="PROSITE" id="PS00815">
    <property type="entry name" value="AIPM_HOMOCIT_SYNTH_1"/>
    <property type="match status" value="1"/>
</dbReference>
<dbReference type="PROSITE" id="PS00816">
    <property type="entry name" value="AIPM_HOMOCIT_SYNTH_2"/>
    <property type="match status" value="1"/>
</dbReference>
<dbReference type="PROSITE" id="PS50991">
    <property type="entry name" value="PYR_CT"/>
    <property type="match status" value="1"/>
</dbReference>
<sequence>MLKNPATKYRSFKPIDLTDRQWPSRTITRPPIWMSTDLRDGNQSLFEPMDAQRKMRMFKTLVQIGFKEIEVAFPSASQTDFNFVRELIEGGHIPDDVTIEVLTQARDDLIERTFESLRGVPRAIVHLYNATAPEFRKIVFNLEKSGVKELAQNAARTMKRIAATMPETQFTFQYSPEVFSGTEIEFAKEVCDAVFDIWEPTPEHKAIVNLPATVEMSTPNIYADQIEWMHRNLKRRDSLVISVHPHNDRGTAVAAAELAVMAGADRIEGCLFGNGERTGNVDLVTLALNLYTQGVDPGLDFSNINEVARTAEECTQLPIHPRHPYVGDLVFTAFSGSHQDAIKKGFAVQKPDAMWEVPYMPIDPADLGRTYDSVIRVNSQSGKGGIAYLLEQGYGVVLPRRLQVDFSSAVQRFTDDSGQEVTSAQIWELFQQEYVQNATPVHYVGHSLSERDGREHIKLTVDINGTRRVLNGAGNGPLDALMHAIGVPVRIQHYEERALTQGADARAVAVAEMAGADVTGSAFGVGIDANLVTASIRAVISGVNRAYARVNAQAKERFFEAAMNDATESVGV</sequence>
<name>LEU1_PARXL</name>
<feature type="chain" id="PRO_1000129501" description="2-isopropylmalate synthase">
    <location>
        <begin position="1"/>
        <end position="572"/>
    </location>
</feature>
<feature type="domain" description="Pyruvate carboxyltransferase" evidence="1">
    <location>
        <begin position="31"/>
        <end position="305"/>
    </location>
</feature>
<feature type="region of interest" description="Regulatory domain" evidence="1">
    <location>
        <begin position="437"/>
        <end position="572"/>
    </location>
</feature>
<feature type="binding site" evidence="1">
    <location>
        <position position="40"/>
    </location>
    <ligand>
        <name>Mg(2+)</name>
        <dbReference type="ChEBI" id="CHEBI:18420"/>
    </ligand>
</feature>
<feature type="binding site" evidence="1">
    <location>
        <position position="244"/>
    </location>
    <ligand>
        <name>Mg(2+)</name>
        <dbReference type="ChEBI" id="CHEBI:18420"/>
    </ligand>
</feature>
<feature type="binding site" evidence="1">
    <location>
        <position position="246"/>
    </location>
    <ligand>
        <name>Mg(2+)</name>
        <dbReference type="ChEBI" id="CHEBI:18420"/>
    </ligand>
</feature>
<feature type="binding site" evidence="1">
    <location>
        <position position="280"/>
    </location>
    <ligand>
        <name>Mg(2+)</name>
        <dbReference type="ChEBI" id="CHEBI:18420"/>
    </ligand>
</feature>
<gene>
    <name evidence="1" type="primary">leuA</name>
    <name type="ordered locus">Bxeno_A2981</name>
    <name type="ORF">Bxe_A1435</name>
</gene>